<name>ENO_PELUB</name>
<sequence length="418" mass="46377">MSKILKIKARQVFDSRGNPTIEAEVYSKKLSASAICPSGASTGTYEAFEKRDDNNKKYLGKSVLGTVNLVNTKISKKLIGTNIHDQTRIDTILINLDGTRQKTNLGANAILAVSMAAKKLSAKIKNVPLYKTFLVKNNYKLPYPLMNIINGGAHANNGLRIQEFMIRPDKAKNFSEAMRICFVVINNLKKLIIKKGLSTSVGDEGGFAPMISNNEKALDLVVAAINKSGFKNGKDVSICLDVAANELMKKDKYSIHSKKFVSVDQSIKEYKKIINKYKIKSIEDPFGENDWMAWSKLMKNTNNVQIVGDDLYVTNLERLKKGFLNNSSNSILIKLNQIGTVSETLEVIKFAQIIGYKTIISHRSGDSEDTFIADLAVGTNSNQIKTGSLARSERVAKYNQLLRIEEELGKKASMSKIH</sequence>
<dbReference type="EC" id="4.2.1.11" evidence="1"/>
<dbReference type="EMBL" id="CP000084">
    <property type="protein sequence ID" value="AAZ21751.1"/>
    <property type="molecule type" value="Genomic_DNA"/>
</dbReference>
<dbReference type="RefSeq" id="WP_011282055.1">
    <property type="nucleotide sequence ID" value="NC_007205.1"/>
</dbReference>
<dbReference type="SMR" id="Q4FM37"/>
<dbReference type="STRING" id="335992.SAR11_0939"/>
<dbReference type="GeneID" id="66295430"/>
<dbReference type="KEGG" id="pub:SAR11_0939"/>
<dbReference type="eggNOG" id="COG0148">
    <property type="taxonomic scope" value="Bacteria"/>
</dbReference>
<dbReference type="HOGENOM" id="CLU_031223_2_1_5"/>
<dbReference type="OrthoDB" id="9804716at2"/>
<dbReference type="UniPathway" id="UPA00109">
    <property type="reaction ID" value="UER00187"/>
</dbReference>
<dbReference type="Proteomes" id="UP000002528">
    <property type="component" value="Chromosome"/>
</dbReference>
<dbReference type="GO" id="GO:0009986">
    <property type="term" value="C:cell surface"/>
    <property type="evidence" value="ECO:0007669"/>
    <property type="project" value="UniProtKB-SubCell"/>
</dbReference>
<dbReference type="GO" id="GO:0005576">
    <property type="term" value="C:extracellular region"/>
    <property type="evidence" value="ECO:0007669"/>
    <property type="project" value="UniProtKB-SubCell"/>
</dbReference>
<dbReference type="GO" id="GO:0000015">
    <property type="term" value="C:phosphopyruvate hydratase complex"/>
    <property type="evidence" value="ECO:0007669"/>
    <property type="project" value="InterPro"/>
</dbReference>
<dbReference type="GO" id="GO:0000287">
    <property type="term" value="F:magnesium ion binding"/>
    <property type="evidence" value="ECO:0007669"/>
    <property type="project" value="UniProtKB-UniRule"/>
</dbReference>
<dbReference type="GO" id="GO:0004634">
    <property type="term" value="F:phosphopyruvate hydratase activity"/>
    <property type="evidence" value="ECO:0007669"/>
    <property type="project" value="UniProtKB-UniRule"/>
</dbReference>
<dbReference type="GO" id="GO:0006096">
    <property type="term" value="P:glycolytic process"/>
    <property type="evidence" value="ECO:0007669"/>
    <property type="project" value="UniProtKB-UniRule"/>
</dbReference>
<dbReference type="CDD" id="cd03313">
    <property type="entry name" value="enolase"/>
    <property type="match status" value="1"/>
</dbReference>
<dbReference type="Gene3D" id="3.20.20.120">
    <property type="entry name" value="Enolase-like C-terminal domain"/>
    <property type="match status" value="1"/>
</dbReference>
<dbReference type="Gene3D" id="3.30.390.10">
    <property type="entry name" value="Enolase-like, N-terminal domain"/>
    <property type="match status" value="1"/>
</dbReference>
<dbReference type="HAMAP" id="MF_00318">
    <property type="entry name" value="Enolase"/>
    <property type="match status" value="1"/>
</dbReference>
<dbReference type="InterPro" id="IPR000941">
    <property type="entry name" value="Enolase"/>
</dbReference>
<dbReference type="InterPro" id="IPR036849">
    <property type="entry name" value="Enolase-like_C_sf"/>
</dbReference>
<dbReference type="InterPro" id="IPR029017">
    <property type="entry name" value="Enolase-like_N"/>
</dbReference>
<dbReference type="InterPro" id="IPR020810">
    <property type="entry name" value="Enolase_C"/>
</dbReference>
<dbReference type="InterPro" id="IPR020809">
    <property type="entry name" value="Enolase_CS"/>
</dbReference>
<dbReference type="InterPro" id="IPR020811">
    <property type="entry name" value="Enolase_N"/>
</dbReference>
<dbReference type="NCBIfam" id="TIGR01060">
    <property type="entry name" value="eno"/>
    <property type="match status" value="1"/>
</dbReference>
<dbReference type="PANTHER" id="PTHR11902">
    <property type="entry name" value="ENOLASE"/>
    <property type="match status" value="1"/>
</dbReference>
<dbReference type="PANTHER" id="PTHR11902:SF1">
    <property type="entry name" value="ENOLASE"/>
    <property type="match status" value="1"/>
</dbReference>
<dbReference type="Pfam" id="PF00113">
    <property type="entry name" value="Enolase_C"/>
    <property type="match status" value="1"/>
</dbReference>
<dbReference type="Pfam" id="PF03952">
    <property type="entry name" value="Enolase_N"/>
    <property type="match status" value="1"/>
</dbReference>
<dbReference type="PIRSF" id="PIRSF001400">
    <property type="entry name" value="Enolase"/>
    <property type="match status" value="1"/>
</dbReference>
<dbReference type="PRINTS" id="PR00148">
    <property type="entry name" value="ENOLASE"/>
</dbReference>
<dbReference type="SFLD" id="SFLDS00001">
    <property type="entry name" value="Enolase"/>
    <property type="match status" value="1"/>
</dbReference>
<dbReference type="SFLD" id="SFLDF00002">
    <property type="entry name" value="enolase"/>
    <property type="match status" value="1"/>
</dbReference>
<dbReference type="SMART" id="SM01192">
    <property type="entry name" value="Enolase_C"/>
    <property type="match status" value="1"/>
</dbReference>
<dbReference type="SMART" id="SM01193">
    <property type="entry name" value="Enolase_N"/>
    <property type="match status" value="1"/>
</dbReference>
<dbReference type="SUPFAM" id="SSF51604">
    <property type="entry name" value="Enolase C-terminal domain-like"/>
    <property type="match status" value="1"/>
</dbReference>
<dbReference type="SUPFAM" id="SSF54826">
    <property type="entry name" value="Enolase N-terminal domain-like"/>
    <property type="match status" value="1"/>
</dbReference>
<dbReference type="PROSITE" id="PS00164">
    <property type="entry name" value="ENOLASE"/>
    <property type="match status" value="1"/>
</dbReference>
<accession>Q4FM37</accession>
<feature type="chain" id="PRO_0000267068" description="Enolase">
    <location>
        <begin position="1"/>
        <end position="418"/>
    </location>
</feature>
<feature type="active site" description="Proton donor" evidence="1">
    <location>
        <position position="204"/>
    </location>
</feature>
<feature type="active site" description="Proton acceptor" evidence="1">
    <location>
        <position position="334"/>
    </location>
</feature>
<feature type="binding site" evidence="1">
    <location>
        <position position="162"/>
    </location>
    <ligand>
        <name>(2R)-2-phosphoglycerate</name>
        <dbReference type="ChEBI" id="CHEBI:58289"/>
    </ligand>
</feature>
<feature type="binding site" evidence="1">
    <location>
        <position position="241"/>
    </location>
    <ligand>
        <name>Mg(2+)</name>
        <dbReference type="ChEBI" id="CHEBI:18420"/>
    </ligand>
</feature>
<feature type="binding site" evidence="1">
    <location>
        <position position="283"/>
    </location>
    <ligand>
        <name>Mg(2+)</name>
        <dbReference type="ChEBI" id="CHEBI:18420"/>
    </ligand>
</feature>
<feature type="binding site" evidence="1">
    <location>
        <position position="309"/>
    </location>
    <ligand>
        <name>Mg(2+)</name>
        <dbReference type="ChEBI" id="CHEBI:18420"/>
    </ligand>
</feature>
<feature type="binding site" evidence="1">
    <location>
        <position position="334"/>
    </location>
    <ligand>
        <name>(2R)-2-phosphoglycerate</name>
        <dbReference type="ChEBI" id="CHEBI:58289"/>
    </ligand>
</feature>
<feature type="binding site" evidence="1">
    <location>
        <position position="363"/>
    </location>
    <ligand>
        <name>(2R)-2-phosphoglycerate</name>
        <dbReference type="ChEBI" id="CHEBI:58289"/>
    </ligand>
</feature>
<feature type="binding site" evidence="1">
    <location>
        <position position="364"/>
    </location>
    <ligand>
        <name>(2R)-2-phosphoglycerate</name>
        <dbReference type="ChEBI" id="CHEBI:58289"/>
    </ligand>
</feature>
<feature type="binding site" evidence="1">
    <location>
        <position position="385"/>
    </location>
    <ligand>
        <name>(2R)-2-phosphoglycerate</name>
        <dbReference type="ChEBI" id="CHEBI:58289"/>
    </ligand>
</feature>
<proteinExistence type="inferred from homology"/>
<gene>
    <name evidence="1" type="primary">eno</name>
    <name type="ordered locus">SAR11_0939</name>
</gene>
<comment type="function">
    <text evidence="1">Catalyzes the reversible conversion of 2-phosphoglycerate (2-PG) into phosphoenolpyruvate (PEP). It is essential for the degradation of carbohydrates via glycolysis.</text>
</comment>
<comment type="catalytic activity">
    <reaction evidence="1">
        <text>(2R)-2-phosphoglycerate = phosphoenolpyruvate + H2O</text>
        <dbReference type="Rhea" id="RHEA:10164"/>
        <dbReference type="ChEBI" id="CHEBI:15377"/>
        <dbReference type="ChEBI" id="CHEBI:58289"/>
        <dbReference type="ChEBI" id="CHEBI:58702"/>
        <dbReference type="EC" id="4.2.1.11"/>
    </reaction>
</comment>
<comment type="cofactor">
    <cofactor evidence="1">
        <name>Mg(2+)</name>
        <dbReference type="ChEBI" id="CHEBI:18420"/>
    </cofactor>
    <text evidence="1">Binds a second Mg(2+) ion via substrate during catalysis.</text>
</comment>
<comment type="pathway">
    <text evidence="1">Carbohydrate degradation; glycolysis; pyruvate from D-glyceraldehyde 3-phosphate: step 4/5.</text>
</comment>
<comment type="subcellular location">
    <subcellularLocation>
        <location evidence="1">Cytoplasm</location>
    </subcellularLocation>
    <subcellularLocation>
        <location evidence="1">Secreted</location>
    </subcellularLocation>
    <subcellularLocation>
        <location evidence="1">Cell surface</location>
    </subcellularLocation>
    <text evidence="1">Fractions of enolase are present in both the cytoplasm and on the cell surface.</text>
</comment>
<comment type="similarity">
    <text evidence="1">Belongs to the enolase family.</text>
</comment>
<keyword id="KW-0963">Cytoplasm</keyword>
<keyword id="KW-0324">Glycolysis</keyword>
<keyword id="KW-0456">Lyase</keyword>
<keyword id="KW-0460">Magnesium</keyword>
<keyword id="KW-0479">Metal-binding</keyword>
<keyword id="KW-1185">Reference proteome</keyword>
<keyword id="KW-0964">Secreted</keyword>
<organism>
    <name type="scientific">Pelagibacter ubique (strain HTCC1062)</name>
    <dbReference type="NCBI Taxonomy" id="335992"/>
    <lineage>
        <taxon>Bacteria</taxon>
        <taxon>Pseudomonadati</taxon>
        <taxon>Pseudomonadota</taxon>
        <taxon>Alphaproteobacteria</taxon>
        <taxon>Candidatus Pelagibacterales</taxon>
        <taxon>Candidatus Pelagibacteraceae</taxon>
        <taxon>Candidatus Pelagibacter</taxon>
    </lineage>
</organism>
<evidence type="ECO:0000255" key="1">
    <source>
        <dbReference type="HAMAP-Rule" id="MF_00318"/>
    </source>
</evidence>
<protein>
    <recommendedName>
        <fullName evidence="1">Enolase</fullName>
        <ecNumber evidence="1">4.2.1.11</ecNumber>
    </recommendedName>
    <alternativeName>
        <fullName evidence="1">2-phospho-D-glycerate hydro-lyase</fullName>
    </alternativeName>
    <alternativeName>
        <fullName evidence="1">2-phosphoglycerate dehydratase</fullName>
    </alternativeName>
</protein>
<reference key="1">
    <citation type="journal article" date="2005" name="Science">
        <title>Genome streamlining in a cosmopolitan oceanic bacterium.</title>
        <authorList>
            <person name="Giovannoni S.J."/>
            <person name="Tripp H.J."/>
            <person name="Givan S."/>
            <person name="Podar M."/>
            <person name="Vergin K.L."/>
            <person name="Baptista D."/>
            <person name="Bibbs L."/>
            <person name="Eads J."/>
            <person name="Richardson T.H."/>
            <person name="Noordewier M."/>
            <person name="Rappe M.S."/>
            <person name="Short J.M."/>
            <person name="Carrington J.C."/>
            <person name="Mathur E.J."/>
        </authorList>
    </citation>
    <scope>NUCLEOTIDE SEQUENCE [LARGE SCALE GENOMIC DNA]</scope>
    <source>
        <strain>HTCC1062</strain>
    </source>
</reference>